<keyword id="KW-0597">Phosphoprotein</keyword>
<keyword id="KW-1185">Reference proteome</keyword>
<keyword id="KW-0804">Transcription</keyword>
<keyword id="KW-0805">Transcription regulation</keyword>
<comment type="subunit">
    <text evidence="2">Interacts with DEK3.</text>
</comment>
<comment type="similarity">
    <text evidence="3">Belongs to the GeBP family.</text>
</comment>
<comment type="online information" name="Plant Transcription Factor Database">
    <link uri="https://planttfdb.gao-lab.org/family.php?fam=GeBP#family_intro"/>
</comment>
<dbReference type="EMBL" id="AC005882">
    <property type="protein sequence ID" value="AAD21418.1"/>
    <property type="molecule type" value="Genomic_DNA"/>
</dbReference>
<dbReference type="EMBL" id="CP002684">
    <property type="protein sequence ID" value="AEE33880.1"/>
    <property type="molecule type" value="Genomic_DNA"/>
</dbReference>
<dbReference type="EMBL" id="AK317588">
    <property type="protein sequence ID" value="BAH20252.1"/>
    <property type="molecule type" value="mRNA"/>
</dbReference>
<dbReference type="EMBL" id="AK317613">
    <property type="protein sequence ID" value="BAH20276.1"/>
    <property type="molecule type" value="mRNA"/>
</dbReference>
<dbReference type="EMBL" id="AY087822">
    <property type="protein sequence ID" value="AAM65376.1"/>
    <property type="molecule type" value="mRNA"/>
</dbReference>
<dbReference type="PIR" id="A96643">
    <property type="entry name" value="A96643"/>
</dbReference>
<dbReference type="RefSeq" id="NP_564784.1">
    <property type="nucleotide sequence ID" value="NM_104855.4"/>
</dbReference>
<dbReference type="SMR" id="Q9SYA9"/>
<dbReference type="FunCoup" id="Q9SYA9">
    <property type="interactions" value="934"/>
</dbReference>
<dbReference type="IntAct" id="Q9SYA9">
    <property type="interactions" value="10"/>
</dbReference>
<dbReference type="STRING" id="3702.Q9SYA9"/>
<dbReference type="iPTMnet" id="Q9SYA9"/>
<dbReference type="PaxDb" id="3702-AT1G61730.1"/>
<dbReference type="ProteomicsDB" id="228299"/>
<dbReference type="EnsemblPlants" id="AT1G61730.1">
    <property type="protein sequence ID" value="AT1G61730.1"/>
    <property type="gene ID" value="AT1G61730"/>
</dbReference>
<dbReference type="GeneID" id="842470"/>
<dbReference type="Gramene" id="AT1G61730.1">
    <property type="protein sequence ID" value="AT1G61730.1"/>
    <property type="gene ID" value="AT1G61730"/>
</dbReference>
<dbReference type="KEGG" id="ath:AT1G61730"/>
<dbReference type="Araport" id="AT1G61730"/>
<dbReference type="TAIR" id="AT1G61730"/>
<dbReference type="eggNOG" id="ENOG502RQE9">
    <property type="taxonomic scope" value="Eukaryota"/>
</dbReference>
<dbReference type="HOGENOM" id="CLU_051273_0_0_1"/>
<dbReference type="InParanoid" id="Q9SYA9"/>
<dbReference type="OMA" id="ELCEKVW"/>
<dbReference type="PhylomeDB" id="Q9SYA9"/>
<dbReference type="CD-CODE" id="4299E36E">
    <property type="entry name" value="Nucleolus"/>
</dbReference>
<dbReference type="PRO" id="PR:Q9SYA9"/>
<dbReference type="Proteomes" id="UP000006548">
    <property type="component" value="Chromosome 1"/>
</dbReference>
<dbReference type="ExpressionAtlas" id="Q9SYA9">
    <property type="expression patterns" value="baseline and differential"/>
</dbReference>
<dbReference type="GO" id="GO:0005730">
    <property type="term" value="C:nucleolus"/>
    <property type="evidence" value="ECO:0007005"/>
    <property type="project" value="TAIR"/>
</dbReference>
<dbReference type="GO" id="GO:0000976">
    <property type="term" value="F:transcription cis-regulatory region binding"/>
    <property type="evidence" value="ECO:0000353"/>
    <property type="project" value="TAIR"/>
</dbReference>
<dbReference type="GO" id="GO:0019760">
    <property type="term" value="P:glucosinolate metabolic process"/>
    <property type="evidence" value="ECO:0000315"/>
    <property type="project" value="TAIR"/>
</dbReference>
<dbReference type="GO" id="GO:0006355">
    <property type="term" value="P:regulation of DNA-templated transcription"/>
    <property type="evidence" value="ECO:0000304"/>
    <property type="project" value="TAIR"/>
</dbReference>
<dbReference type="InterPro" id="IPR007592">
    <property type="entry name" value="GEBP"/>
</dbReference>
<dbReference type="InterPro" id="IPR053933">
    <property type="entry name" value="GeBP-like_C"/>
</dbReference>
<dbReference type="InterPro" id="IPR053932">
    <property type="entry name" value="GeBP-like_DBD"/>
</dbReference>
<dbReference type="PANTHER" id="PTHR31662">
    <property type="entry name" value="BNAANNG10740D PROTEIN-RELATED"/>
    <property type="match status" value="1"/>
</dbReference>
<dbReference type="PANTHER" id="PTHR31662:SF68">
    <property type="entry name" value="DNA-BINDING STOREKEEPER PROTEIN TRANSCRIPTIONAL REGULATOR-LIKE PROTEIN-RELATED"/>
    <property type="match status" value="1"/>
</dbReference>
<dbReference type="Pfam" id="PF22757">
    <property type="entry name" value="GeBP-like_C"/>
    <property type="match status" value="1"/>
</dbReference>
<dbReference type="Pfam" id="PF04504">
    <property type="entry name" value="GeBP-like_DBD"/>
    <property type="match status" value="1"/>
</dbReference>
<protein>
    <recommendedName>
        <fullName evidence="3">Probable transcription factor At1g61730</fullName>
    </recommendedName>
    <alternativeName>
        <fullName evidence="3">Storekeeper-like protein At1g61730</fullName>
    </alternativeName>
</protein>
<gene>
    <name evidence="4" type="ordered locus">At1g61730</name>
    <name evidence="5" type="ORF">T13M11.9</name>
</gene>
<feature type="chain" id="PRO_0000436978" description="Probable transcription factor At1g61730">
    <location>
        <begin position="1"/>
        <end position="376"/>
    </location>
</feature>
<feature type="region of interest" description="Disordered" evidence="1">
    <location>
        <begin position="1"/>
        <end position="150"/>
    </location>
</feature>
<feature type="compositionally biased region" description="Acidic residues" evidence="1">
    <location>
        <begin position="17"/>
        <end position="40"/>
    </location>
</feature>
<feature type="compositionally biased region" description="Low complexity" evidence="1">
    <location>
        <begin position="49"/>
        <end position="72"/>
    </location>
</feature>
<feature type="compositionally biased region" description="Acidic residues" evidence="1">
    <location>
        <begin position="73"/>
        <end position="83"/>
    </location>
</feature>
<feature type="compositionally biased region" description="Polar residues" evidence="1">
    <location>
        <begin position="87"/>
        <end position="103"/>
    </location>
</feature>
<feature type="modified residue" description="Phosphoserine" evidence="6">
    <location>
        <position position="49"/>
    </location>
</feature>
<feature type="sequence conflict" description="In Ref. 3; AAM65376." evidence="3" ref="3">
    <original>V</original>
    <variation>A</variation>
    <location>
        <position position="41"/>
    </location>
</feature>
<feature type="sequence conflict" description="In Ref. 3; AAM65376." evidence="3" ref="3">
    <original>T</original>
    <variation>A</variation>
    <location>
        <position position="67"/>
    </location>
</feature>
<feature type="sequence conflict" description="In Ref. 3; AAM65376." evidence="3" ref="3">
    <original>T</original>
    <variation>A</variation>
    <location>
        <position position="101"/>
    </location>
</feature>
<feature type="sequence conflict" description="In Ref. 3; AAM65376." evidence="3" ref="3">
    <original>M</original>
    <variation>V</variation>
    <location>
        <position position="122"/>
    </location>
</feature>
<feature type="sequence conflict" description="In Ref. 3; AAM65376." evidence="3" ref="3">
    <original>S</original>
    <variation>T</variation>
    <location>
        <position position="148"/>
    </location>
</feature>
<feature type="sequence conflict" description="In Ref. 3; AAM65376." evidence="3" ref="3">
    <original>A</original>
    <variation>V</variation>
    <location>
        <position position="280"/>
    </location>
</feature>
<feature type="sequence conflict" description="In Ref. 3; AAM65376." evidence="3" ref="3">
    <original>T</original>
    <variation>TN</variation>
    <location>
        <position position="285"/>
    </location>
</feature>
<evidence type="ECO:0000256" key="1">
    <source>
        <dbReference type="SAM" id="MobiDB-lite"/>
    </source>
</evidence>
<evidence type="ECO:0000269" key="2">
    <source>
    </source>
</evidence>
<evidence type="ECO:0000305" key="3"/>
<evidence type="ECO:0000312" key="4">
    <source>
        <dbReference type="Araport" id="AT1G61730"/>
    </source>
</evidence>
<evidence type="ECO:0000312" key="5">
    <source>
        <dbReference type="EMBL" id="AAD21418.1"/>
    </source>
</evidence>
<evidence type="ECO:0007744" key="6">
    <source>
    </source>
</evidence>
<accession>Q9SYA9</accession>
<accession>B9DHQ9</accession>
<accession>Q8LAG8</accession>
<proteinExistence type="evidence at protein level"/>
<name>STKLD_ARATH</name>
<reference key="1">
    <citation type="journal article" date="2000" name="Nature">
        <title>Sequence and analysis of chromosome 1 of the plant Arabidopsis thaliana.</title>
        <authorList>
            <person name="Theologis A."/>
            <person name="Ecker J.R."/>
            <person name="Palm C.J."/>
            <person name="Federspiel N.A."/>
            <person name="Kaul S."/>
            <person name="White O."/>
            <person name="Alonso J."/>
            <person name="Altafi H."/>
            <person name="Araujo R."/>
            <person name="Bowman C.L."/>
            <person name="Brooks S.Y."/>
            <person name="Buehler E."/>
            <person name="Chan A."/>
            <person name="Chao Q."/>
            <person name="Chen H."/>
            <person name="Cheuk R.F."/>
            <person name="Chin C.W."/>
            <person name="Chung M.K."/>
            <person name="Conn L."/>
            <person name="Conway A.B."/>
            <person name="Conway A.R."/>
            <person name="Creasy T.H."/>
            <person name="Dewar K."/>
            <person name="Dunn P."/>
            <person name="Etgu P."/>
            <person name="Feldblyum T.V."/>
            <person name="Feng J.-D."/>
            <person name="Fong B."/>
            <person name="Fujii C.Y."/>
            <person name="Gill J.E."/>
            <person name="Goldsmith A.D."/>
            <person name="Haas B."/>
            <person name="Hansen N.F."/>
            <person name="Hughes B."/>
            <person name="Huizar L."/>
            <person name="Hunter J.L."/>
            <person name="Jenkins J."/>
            <person name="Johnson-Hopson C."/>
            <person name="Khan S."/>
            <person name="Khaykin E."/>
            <person name="Kim C.J."/>
            <person name="Koo H.L."/>
            <person name="Kremenetskaia I."/>
            <person name="Kurtz D.B."/>
            <person name="Kwan A."/>
            <person name="Lam B."/>
            <person name="Langin-Hooper S."/>
            <person name="Lee A."/>
            <person name="Lee J.M."/>
            <person name="Lenz C.A."/>
            <person name="Li J.H."/>
            <person name="Li Y.-P."/>
            <person name="Lin X."/>
            <person name="Liu S.X."/>
            <person name="Liu Z.A."/>
            <person name="Luros J.S."/>
            <person name="Maiti R."/>
            <person name="Marziali A."/>
            <person name="Militscher J."/>
            <person name="Miranda M."/>
            <person name="Nguyen M."/>
            <person name="Nierman W.C."/>
            <person name="Osborne B.I."/>
            <person name="Pai G."/>
            <person name="Peterson J."/>
            <person name="Pham P.K."/>
            <person name="Rizzo M."/>
            <person name="Rooney T."/>
            <person name="Rowley D."/>
            <person name="Sakano H."/>
            <person name="Salzberg S.L."/>
            <person name="Schwartz J.R."/>
            <person name="Shinn P."/>
            <person name="Southwick A.M."/>
            <person name="Sun H."/>
            <person name="Tallon L.J."/>
            <person name="Tambunga G."/>
            <person name="Toriumi M.J."/>
            <person name="Town C.D."/>
            <person name="Utterback T."/>
            <person name="Van Aken S."/>
            <person name="Vaysberg M."/>
            <person name="Vysotskaia V.S."/>
            <person name="Walker M."/>
            <person name="Wu D."/>
            <person name="Yu G."/>
            <person name="Fraser C.M."/>
            <person name="Venter J.C."/>
            <person name="Davis R.W."/>
        </authorList>
    </citation>
    <scope>NUCLEOTIDE SEQUENCE [LARGE SCALE GENOMIC DNA]</scope>
    <source>
        <strain>cv. Columbia</strain>
    </source>
</reference>
<reference key="2">
    <citation type="journal article" date="2017" name="Plant J.">
        <title>Araport11: a complete reannotation of the Arabidopsis thaliana reference genome.</title>
        <authorList>
            <person name="Cheng C.Y."/>
            <person name="Krishnakumar V."/>
            <person name="Chan A.P."/>
            <person name="Thibaud-Nissen F."/>
            <person name="Schobel S."/>
            <person name="Town C.D."/>
        </authorList>
    </citation>
    <scope>GENOME REANNOTATION</scope>
    <source>
        <strain>cv. Columbia</strain>
    </source>
</reference>
<reference key="3">
    <citation type="submission" date="2002-03" db="EMBL/GenBank/DDBJ databases">
        <title>Full-length cDNA from Arabidopsis thaliana.</title>
        <authorList>
            <person name="Brover V.V."/>
            <person name="Troukhan M.E."/>
            <person name="Alexandrov N.A."/>
            <person name="Lu Y.-P."/>
            <person name="Flavell R.B."/>
            <person name="Feldmann K.A."/>
        </authorList>
    </citation>
    <scope>NUCLEOTIDE SEQUENCE [LARGE SCALE MRNA]</scope>
</reference>
<reference key="4">
    <citation type="journal article" date="2009" name="DNA Res.">
        <title>Analysis of multiple occurrences of alternative splicing events in Arabidopsis thaliana using novel sequenced full-length cDNAs.</title>
        <authorList>
            <person name="Iida K."/>
            <person name="Fukami-Kobayashi K."/>
            <person name="Toyoda A."/>
            <person name="Sakaki Y."/>
            <person name="Kobayashi M."/>
            <person name="Seki M."/>
            <person name="Shinozaki K."/>
        </authorList>
    </citation>
    <scope>NUCLEOTIDE SEQUENCE [LARGE SCALE MRNA]</scope>
    <source>
        <strain>cv. Columbia</strain>
        <tissue>Rosette leaf</tissue>
    </source>
</reference>
<reference key="5">
    <citation type="journal article" date="2003" name="Plant J.">
        <title>GeBP, the first member of a new gene family in Arabidopsis, encodes a nuclear protein with DNA-binding activity and is regulated by KNAT1.</title>
        <authorList>
            <person name="Curaba J."/>
            <person name="Herzog M."/>
            <person name="Vachon G."/>
        </authorList>
    </citation>
    <scope>GENE FAMILY</scope>
</reference>
<reference key="6">
    <citation type="journal article" date="2008" name="J. Proteome Res.">
        <title>Site-specific phosphorylation profiling of Arabidopsis proteins by mass spectrometry and peptide chip analysis.</title>
        <authorList>
            <person name="de la Fuente van Bentem S."/>
            <person name="Anrather D."/>
            <person name="Dohnal I."/>
            <person name="Roitinger E."/>
            <person name="Csaszar E."/>
            <person name="Joore J."/>
            <person name="Buijnink J."/>
            <person name="Carreri A."/>
            <person name="Forzani C."/>
            <person name="Lorkovic Z.J."/>
            <person name="Barta A."/>
            <person name="Lecourieux D."/>
            <person name="Verhounig A."/>
            <person name="Jonak C."/>
            <person name="Hirt H."/>
        </authorList>
    </citation>
    <scope>PHOSPHORYLATION [LARGE SCALE ANALYSIS] AT SER-49</scope>
    <scope>IDENTIFICATION BY MASS SPECTROMETRY [LARGE SCALE ANALYSIS]</scope>
    <source>
        <tissue>Root</tissue>
    </source>
</reference>
<reference key="7">
    <citation type="journal article" date="2009" name="J. Proteomics">
        <title>Phosphoproteomic analysis of nuclei-enriched fractions from Arabidopsis thaliana.</title>
        <authorList>
            <person name="Jones A.M.E."/>
            <person name="MacLean D."/>
            <person name="Studholme D.J."/>
            <person name="Serna-Sanz A."/>
            <person name="Andreasson E."/>
            <person name="Rathjen J.P."/>
            <person name="Peck S.C."/>
        </authorList>
    </citation>
    <scope>IDENTIFICATION BY MASS SPECTROMETRY [LARGE SCALE ANALYSIS]</scope>
    <source>
        <strain>cv. Columbia</strain>
    </source>
</reference>
<reference key="8">
    <citation type="journal article" date="2009" name="Plant Physiol.">
        <title>Large-scale Arabidopsis phosphoproteome profiling reveals novel chloroplast kinase substrates and phosphorylation networks.</title>
        <authorList>
            <person name="Reiland S."/>
            <person name="Messerli G."/>
            <person name="Baerenfaller K."/>
            <person name="Gerrits B."/>
            <person name="Endler A."/>
            <person name="Grossmann J."/>
            <person name="Gruissem W."/>
            <person name="Baginsky S."/>
        </authorList>
    </citation>
    <scope>IDENTIFICATION BY MASS SPECTROMETRY [LARGE SCALE ANALYSIS]</scope>
</reference>
<reference key="9">
    <citation type="journal article" date="2014" name="Plant Cell">
        <title>A DEK domain-containing protein modulates chromatin structure and function in Arabidopsis.</title>
        <authorList>
            <person name="Waidmann S."/>
            <person name="Kusenda B."/>
            <person name="Mayerhofer J."/>
            <person name="Mechtler K."/>
            <person name="Jonak C."/>
        </authorList>
    </citation>
    <scope>INTERACTION WITH DEK3</scope>
    <scope>IDENTIFICATION BY MASS SPECTROMETRY</scope>
    <source>
        <strain>cv. Columbia</strain>
    </source>
</reference>
<reference key="10">
    <citation type="journal article" date="2016" name="Plant Physiol. Biochem.">
        <title>Regulation of Arabidopsis thaliana plasma membrane glucose-responsive regulator (AtPGR) expression by A. thaliana storekeeper-like transcription factor, AtSTKL, modulates glucose response in Arabidopsis.</title>
        <authorList>
            <person name="Chung M.S."/>
            <person name="Lee S."/>
            <person name="Min J.H."/>
            <person name="Huang P."/>
            <person name="Ju H.W."/>
            <person name="Kim C.S."/>
        </authorList>
    </citation>
    <scope>GENE FAMILY</scope>
</reference>
<sequence>MTKKLNPLEDPPTATSSDEDDVETSEAGEASDDSSSSEEDVPIKIRIKSPSATTAAAPPAKSTAVSTAADSDSGSETETDSDSESTNPPNSGSGKTIALNTVNLKKKEDPTSSSATLALPAMKSGTKRPASEAAATTSTKRVKKDEESVKKPGGFQRLWSEEDEILVLQGMIDFKADTGKSPYVDTNAFYDFLKKSISFEVSKNQFMDKIRSLRKKYIGKEGRNEPSFVKAHDKKAFELSKFIWGPKGIALDSNVKSNGVSKKSVAKKKIDSVKQELVFAGGSSTNGKKVEEDGGDDGCDWFDNSSLVRMIASLGVDEYYVKQQWSLVSVESKKIVEEKYKLLQAKELEFVLEKTKFLNEVASMFVEASKNKPLDT</sequence>
<organism>
    <name type="scientific">Arabidopsis thaliana</name>
    <name type="common">Mouse-ear cress</name>
    <dbReference type="NCBI Taxonomy" id="3702"/>
    <lineage>
        <taxon>Eukaryota</taxon>
        <taxon>Viridiplantae</taxon>
        <taxon>Streptophyta</taxon>
        <taxon>Embryophyta</taxon>
        <taxon>Tracheophyta</taxon>
        <taxon>Spermatophyta</taxon>
        <taxon>Magnoliopsida</taxon>
        <taxon>eudicotyledons</taxon>
        <taxon>Gunneridae</taxon>
        <taxon>Pentapetalae</taxon>
        <taxon>rosids</taxon>
        <taxon>malvids</taxon>
        <taxon>Brassicales</taxon>
        <taxon>Brassicaceae</taxon>
        <taxon>Camelineae</taxon>
        <taxon>Arabidopsis</taxon>
    </lineage>
</organism>